<organism>
    <name type="scientific">Oceanobacillus iheyensis (strain DSM 14371 / CIP 107618 / JCM 11309 / KCTC 3954 / HTE831)</name>
    <dbReference type="NCBI Taxonomy" id="221109"/>
    <lineage>
        <taxon>Bacteria</taxon>
        <taxon>Bacillati</taxon>
        <taxon>Bacillota</taxon>
        <taxon>Bacilli</taxon>
        <taxon>Bacillales</taxon>
        <taxon>Bacillaceae</taxon>
        <taxon>Oceanobacillus</taxon>
    </lineage>
</organism>
<proteinExistence type="inferred from homology"/>
<feature type="chain" id="PRO_0000176808" description="Small ribosomal subunit protein bS6">
    <location>
        <begin position="1"/>
        <end position="95"/>
    </location>
</feature>
<sequence>MRKYEIMYIIRPDIEEEAQTALIERFNTILTDNGAEIDKVDEKGKRRLAYEINDYRDGYYVIINFRGSEEAINEFDRLAKFNDDIIRHMAIKDEQ</sequence>
<name>RS6_OCEIH</name>
<comment type="function">
    <text evidence="1">Binds together with bS18 to 16S ribosomal RNA.</text>
</comment>
<comment type="similarity">
    <text evidence="1">Belongs to the bacterial ribosomal protein bS6 family.</text>
</comment>
<protein>
    <recommendedName>
        <fullName evidence="1">Small ribosomal subunit protein bS6</fullName>
    </recommendedName>
    <alternativeName>
        <fullName evidence="2">30S ribosomal protein S6</fullName>
    </alternativeName>
</protein>
<dbReference type="EMBL" id="BA000028">
    <property type="protein sequence ID" value="BAC15435.1"/>
    <property type="molecule type" value="Genomic_DNA"/>
</dbReference>
<dbReference type="RefSeq" id="WP_011067877.1">
    <property type="nucleotide sequence ID" value="NC_004193.1"/>
</dbReference>
<dbReference type="SMR" id="Q8EKV4"/>
<dbReference type="STRING" id="221109.gene:10735731"/>
<dbReference type="KEGG" id="oih:OB3479"/>
<dbReference type="eggNOG" id="COG0360">
    <property type="taxonomic scope" value="Bacteria"/>
</dbReference>
<dbReference type="HOGENOM" id="CLU_113441_5_3_9"/>
<dbReference type="OrthoDB" id="9812702at2"/>
<dbReference type="PhylomeDB" id="Q8EKV4"/>
<dbReference type="Proteomes" id="UP000000822">
    <property type="component" value="Chromosome"/>
</dbReference>
<dbReference type="GO" id="GO:0005737">
    <property type="term" value="C:cytoplasm"/>
    <property type="evidence" value="ECO:0007669"/>
    <property type="project" value="UniProtKB-ARBA"/>
</dbReference>
<dbReference type="GO" id="GO:1990904">
    <property type="term" value="C:ribonucleoprotein complex"/>
    <property type="evidence" value="ECO:0007669"/>
    <property type="project" value="UniProtKB-KW"/>
</dbReference>
<dbReference type="GO" id="GO:0005840">
    <property type="term" value="C:ribosome"/>
    <property type="evidence" value="ECO:0007669"/>
    <property type="project" value="UniProtKB-KW"/>
</dbReference>
<dbReference type="GO" id="GO:0070181">
    <property type="term" value="F:small ribosomal subunit rRNA binding"/>
    <property type="evidence" value="ECO:0007669"/>
    <property type="project" value="TreeGrafter"/>
</dbReference>
<dbReference type="GO" id="GO:0003735">
    <property type="term" value="F:structural constituent of ribosome"/>
    <property type="evidence" value="ECO:0007669"/>
    <property type="project" value="InterPro"/>
</dbReference>
<dbReference type="GO" id="GO:0006412">
    <property type="term" value="P:translation"/>
    <property type="evidence" value="ECO:0007669"/>
    <property type="project" value="UniProtKB-UniRule"/>
</dbReference>
<dbReference type="CDD" id="cd00473">
    <property type="entry name" value="bS6"/>
    <property type="match status" value="1"/>
</dbReference>
<dbReference type="FunFam" id="3.30.70.60:FF:000002">
    <property type="entry name" value="30S ribosomal protein S6"/>
    <property type="match status" value="1"/>
</dbReference>
<dbReference type="Gene3D" id="3.30.70.60">
    <property type="match status" value="1"/>
</dbReference>
<dbReference type="HAMAP" id="MF_00360">
    <property type="entry name" value="Ribosomal_bS6"/>
    <property type="match status" value="1"/>
</dbReference>
<dbReference type="InterPro" id="IPR000529">
    <property type="entry name" value="Ribosomal_bS6"/>
</dbReference>
<dbReference type="InterPro" id="IPR020815">
    <property type="entry name" value="Ribosomal_bS6_CS"/>
</dbReference>
<dbReference type="InterPro" id="IPR035980">
    <property type="entry name" value="Ribosomal_bS6_sf"/>
</dbReference>
<dbReference type="InterPro" id="IPR020814">
    <property type="entry name" value="Ribosomal_S6_plastid/chlpt"/>
</dbReference>
<dbReference type="InterPro" id="IPR014717">
    <property type="entry name" value="Transl_elong_EF1B/ribsomal_bS6"/>
</dbReference>
<dbReference type="NCBIfam" id="TIGR00166">
    <property type="entry name" value="S6"/>
    <property type="match status" value="1"/>
</dbReference>
<dbReference type="PANTHER" id="PTHR21011">
    <property type="entry name" value="MITOCHONDRIAL 28S RIBOSOMAL PROTEIN S6"/>
    <property type="match status" value="1"/>
</dbReference>
<dbReference type="PANTHER" id="PTHR21011:SF1">
    <property type="entry name" value="SMALL RIBOSOMAL SUBUNIT PROTEIN BS6M"/>
    <property type="match status" value="1"/>
</dbReference>
<dbReference type="Pfam" id="PF01250">
    <property type="entry name" value="Ribosomal_S6"/>
    <property type="match status" value="1"/>
</dbReference>
<dbReference type="SUPFAM" id="SSF54995">
    <property type="entry name" value="Ribosomal protein S6"/>
    <property type="match status" value="1"/>
</dbReference>
<dbReference type="PROSITE" id="PS01048">
    <property type="entry name" value="RIBOSOMAL_S6"/>
    <property type="match status" value="1"/>
</dbReference>
<accession>Q8EKV4</accession>
<keyword id="KW-1185">Reference proteome</keyword>
<keyword id="KW-0687">Ribonucleoprotein</keyword>
<keyword id="KW-0689">Ribosomal protein</keyword>
<keyword id="KW-0694">RNA-binding</keyword>
<keyword id="KW-0699">rRNA-binding</keyword>
<gene>
    <name evidence="1" type="primary">rpsF</name>
    <name type="ordered locus">OB3479</name>
</gene>
<evidence type="ECO:0000255" key="1">
    <source>
        <dbReference type="HAMAP-Rule" id="MF_00360"/>
    </source>
</evidence>
<evidence type="ECO:0000305" key="2"/>
<reference key="1">
    <citation type="journal article" date="2002" name="Nucleic Acids Res.">
        <title>Genome sequence of Oceanobacillus iheyensis isolated from the Iheya Ridge and its unexpected adaptive capabilities to extreme environments.</title>
        <authorList>
            <person name="Takami H."/>
            <person name="Takaki Y."/>
            <person name="Uchiyama I."/>
        </authorList>
    </citation>
    <scope>NUCLEOTIDE SEQUENCE [LARGE SCALE GENOMIC DNA]</scope>
    <source>
        <strain>DSM 14371 / CIP 107618 / JCM 11309 / KCTC 3954 / HTE831</strain>
    </source>
</reference>